<dbReference type="EMBL" id="FN393060">
    <property type="protein sequence ID" value="CBK39317.1"/>
    <property type="molecule type" value="Genomic_DNA"/>
</dbReference>
<dbReference type="SMR" id="D3UEY7"/>
<dbReference type="HOGENOM" id="CLU_010748_2_3_1"/>
<dbReference type="OrthoDB" id="17015at4893"/>
<dbReference type="Proteomes" id="UP000000286">
    <property type="component" value="Chromosome II, Scaffold EC1118_1B15"/>
</dbReference>
<dbReference type="GO" id="GO:0005634">
    <property type="term" value="C:nucleus"/>
    <property type="evidence" value="ECO:0007669"/>
    <property type="project" value="UniProtKB-SubCell"/>
</dbReference>
<dbReference type="GO" id="GO:0000981">
    <property type="term" value="F:DNA-binding transcription factor activity, RNA polymerase II-specific"/>
    <property type="evidence" value="ECO:0007669"/>
    <property type="project" value="InterPro"/>
</dbReference>
<dbReference type="GO" id="GO:0000977">
    <property type="term" value="F:RNA polymerase II transcription regulatory region sequence-specific DNA binding"/>
    <property type="evidence" value="ECO:0007669"/>
    <property type="project" value="TreeGrafter"/>
</dbReference>
<dbReference type="GO" id="GO:0008270">
    <property type="term" value="F:zinc ion binding"/>
    <property type="evidence" value="ECO:0007669"/>
    <property type="project" value="InterPro"/>
</dbReference>
<dbReference type="GO" id="GO:0009267">
    <property type="term" value="P:cellular response to starvation"/>
    <property type="evidence" value="ECO:0007669"/>
    <property type="project" value="TreeGrafter"/>
</dbReference>
<dbReference type="GO" id="GO:0006094">
    <property type="term" value="P:gluconeogenesis"/>
    <property type="evidence" value="ECO:0007669"/>
    <property type="project" value="UniProtKB-KW"/>
</dbReference>
<dbReference type="CDD" id="cd00067">
    <property type="entry name" value="GAL4"/>
    <property type="match status" value="1"/>
</dbReference>
<dbReference type="CDD" id="cd00130">
    <property type="entry name" value="PAS"/>
    <property type="match status" value="1"/>
</dbReference>
<dbReference type="Gene3D" id="3.30.450.20">
    <property type="entry name" value="PAS domain"/>
    <property type="match status" value="1"/>
</dbReference>
<dbReference type="InterPro" id="IPR050335">
    <property type="entry name" value="ERT1_acuK_gluconeogen_tf"/>
</dbReference>
<dbReference type="InterPro" id="IPR000014">
    <property type="entry name" value="PAS"/>
</dbReference>
<dbReference type="InterPro" id="IPR035965">
    <property type="entry name" value="PAS-like_dom_sf"/>
</dbReference>
<dbReference type="InterPro" id="IPR056751">
    <property type="entry name" value="PAS_13"/>
</dbReference>
<dbReference type="InterPro" id="IPR036864">
    <property type="entry name" value="Zn2-C6_fun-type_DNA-bd_sf"/>
</dbReference>
<dbReference type="InterPro" id="IPR001138">
    <property type="entry name" value="Zn2Cys6_DnaBD"/>
</dbReference>
<dbReference type="NCBIfam" id="TIGR00229">
    <property type="entry name" value="sensory_box"/>
    <property type="match status" value="1"/>
</dbReference>
<dbReference type="PANTHER" id="PTHR47659:SF1">
    <property type="entry name" value="TRANSCRIPTION ACTIVATOR OF GLUCONEOGENESIS ERT1"/>
    <property type="match status" value="1"/>
</dbReference>
<dbReference type="PANTHER" id="PTHR47659">
    <property type="entry name" value="ZN(II)2CYS6 TRANSCRIPTION FACTOR (EUROFUNG)-RELATED"/>
    <property type="match status" value="1"/>
</dbReference>
<dbReference type="Pfam" id="PF24990">
    <property type="entry name" value="PAS_13"/>
    <property type="match status" value="1"/>
</dbReference>
<dbReference type="Pfam" id="PF00172">
    <property type="entry name" value="Zn_clus"/>
    <property type="match status" value="1"/>
</dbReference>
<dbReference type="SMART" id="SM00066">
    <property type="entry name" value="GAL4"/>
    <property type="match status" value="1"/>
</dbReference>
<dbReference type="SMART" id="SM00091">
    <property type="entry name" value="PAS"/>
    <property type="match status" value="1"/>
</dbReference>
<dbReference type="SUPFAM" id="SSF55785">
    <property type="entry name" value="PYP-like sensor domain (PAS domain)"/>
    <property type="match status" value="1"/>
</dbReference>
<dbReference type="SUPFAM" id="SSF57701">
    <property type="entry name" value="Zn2/Cys6 DNA-binding domain"/>
    <property type="match status" value="1"/>
</dbReference>
<dbReference type="PROSITE" id="PS50112">
    <property type="entry name" value="PAS"/>
    <property type="match status" value="1"/>
</dbReference>
<dbReference type="PROSITE" id="PS00463">
    <property type="entry name" value="ZN2_CY6_FUNGAL_1"/>
    <property type="match status" value="1"/>
</dbReference>
<dbReference type="PROSITE" id="PS50048">
    <property type="entry name" value="ZN2_CY6_FUNGAL_2"/>
    <property type="match status" value="1"/>
</dbReference>
<evidence type="ECO:0000250" key="1"/>
<evidence type="ECO:0000255" key="2">
    <source>
        <dbReference type="PROSITE-ProRule" id="PRU00140"/>
    </source>
</evidence>
<evidence type="ECO:0000255" key="3">
    <source>
        <dbReference type="PROSITE-ProRule" id="PRU00227"/>
    </source>
</evidence>
<evidence type="ECO:0000256" key="4">
    <source>
        <dbReference type="SAM" id="MobiDB-lite"/>
    </source>
</evidence>
<evidence type="ECO:0000305" key="5"/>
<keyword id="KW-0010">Activator</keyword>
<keyword id="KW-0238">DNA-binding</keyword>
<keyword id="KW-0312">Gluconeogenesis</keyword>
<keyword id="KW-0479">Metal-binding</keyword>
<keyword id="KW-0539">Nucleus</keyword>
<keyword id="KW-0804">Transcription</keyword>
<keyword id="KW-0805">Transcription regulation</keyword>
<keyword id="KW-0862">Zinc</keyword>
<reference key="1">
    <citation type="journal article" date="2009" name="Proc. Natl. Acad. Sci. U.S.A.">
        <title>Eukaryote-to-eukaryote gene transfer events revealed by the genome sequence of the wine yeast Saccharomyces cerevisiae EC1118.</title>
        <authorList>
            <person name="Novo M."/>
            <person name="Bigey F."/>
            <person name="Beyne E."/>
            <person name="Galeote V."/>
            <person name="Gavory F."/>
            <person name="Mallet S."/>
            <person name="Cambon B."/>
            <person name="Legras J.-L."/>
            <person name="Wincker P."/>
            <person name="Casaregola S."/>
            <person name="Dequin S."/>
        </authorList>
    </citation>
    <scope>NUCLEOTIDE SEQUENCE [LARGE SCALE GENOMIC DNA]</scope>
    <source>
        <strain>Lalvin EC1118 / Prise de mousse</strain>
    </source>
</reference>
<feature type="chain" id="PRO_0000406476" description="Transcription activator of gluconeogenesis">
    <location>
        <begin position="1"/>
        <end position="529"/>
    </location>
</feature>
<feature type="domain" description="PAS" evidence="2">
    <location>
        <begin position="408"/>
        <end position="480"/>
    </location>
</feature>
<feature type="DNA-binding region" description="Zn(2)-C6 fungal-type" evidence="3">
    <location>
        <begin position="40"/>
        <end position="68"/>
    </location>
</feature>
<feature type="region of interest" description="Disordered" evidence="4">
    <location>
        <begin position="1"/>
        <end position="31"/>
    </location>
</feature>
<feature type="region of interest" description="Disordered" evidence="4">
    <location>
        <begin position="174"/>
        <end position="198"/>
    </location>
</feature>
<feature type="compositionally biased region" description="Polar residues" evidence="4">
    <location>
        <begin position="14"/>
        <end position="23"/>
    </location>
</feature>
<feature type="compositionally biased region" description="Low complexity" evidence="4">
    <location>
        <begin position="174"/>
        <end position="193"/>
    </location>
</feature>
<comment type="function">
    <text evidence="1">Transcription factor which regulates nonfermentable carbon utilization. Activator of gluconeogenetic genes (By similarity).</text>
</comment>
<comment type="subcellular location">
    <subcellularLocation>
        <location evidence="3">Nucleus</location>
    </subcellularLocation>
</comment>
<comment type="similarity">
    <text evidence="5">Belongs to the ERT1/acuK family.</text>
</comment>
<name>ERT1_YEAS8</name>
<organism>
    <name type="scientific">Saccharomyces cerevisiae (strain Lalvin EC1118 / Prise de mousse)</name>
    <name type="common">Baker's yeast</name>
    <dbReference type="NCBI Taxonomy" id="643680"/>
    <lineage>
        <taxon>Eukaryota</taxon>
        <taxon>Fungi</taxon>
        <taxon>Dikarya</taxon>
        <taxon>Ascomycota</taxon>
        <taxon>Saccharomycotina</taxon>
        <taxon>Saccharomycetes</taxon>
        <taxon>Saccharomycetales</taxon>
        <taxon>Saccharomycetaceae</taxon>
        <taxon>Saccharomyces</taxon>
    </lineage>
</organism>
<sequence length="529" mass="60230">MCTPDENDYKTSTDPDTSANTNHTLEKKKRKKRKNTNVACVNCSRLHVSCEAKRPCLRCISKGLTATCVDAPRKKSKYLAGIPNRELPMSIQPDLPPRKIMIPIYNNSSNSSLNVNNMGEQQKFTSPQHIVHKAKFLSNAADSEYSILSNIIYQDTLSNKIPIDILYSNTNSTSNSTIGNSSNNSPTGTNTSPEETEMEKIRQLYSEQRANMPPHPYPSSNQNVYSILLGPNSAKIVASQVNLFANHFPLVPVDSADNSLNFKRLLPRDPSEKSSQINWDSSINQYYLNSETVTFPELAIPLKRRKNHLVSVSLESCSPDAANIKSNVGWEHSLRYSTPMEIYTSINAPFSHTPGFHHLLVYLKHRFNQQDLVKMCRSIAEFRPIFIACSVTLTEEDMIFMEQCYQRTLLEYVKFIAQIGTPTCIWRRNGQISYVNEEFEILCGWTREELLNKMTFIVEIMDDESVRDYFKTLSKVAYRDFRGSEKMKVCRLLSPIKGKIIHCCCMWTLKRDVSGLPLMILGNFMPILN</sequence>
<accession>D3UEY7</accession>
<protein>
    <recommendedName>
        <fullName>Transcription activator of gluconeogenesis</fullName>
    </recommendedName>
    <alternativeName>
        <fullName>Ethanol regulator of translation 1</fullName>
    </alternativeName>
</protein>
<proteinExistence type="inferred from homology"/>
<gene>
    <name type="primary">ERT1</name>
    <name type="ORF">EC1118_1B15_4181g</name>
</gene>